<feature type="chain" id="PRO_0000102298" description="Lipoyl synthase">
    <location>
        <begin position="1"/>
        <end position="319"/>
    </location>
</feature>
<feature type="domain" description="Radical SAM core" evidence="2">
    <location>
        <begin position="78"/>
        <end position="294"/>
    </location>
</feature>
<feature type="binding site" evidence="1">
    <location>
        <position position="66"/>
    </location>
    <ligand>
        <name>[4Fe-4S] cluster</name>
        <dbReference type="ChEBI" id="CHEBI:49883"/>
        <label>1</label>
    </ligand>
</feature>
<feature type="binding site" evidence="1">
    <location>
        <position position="71"/>
    </location>
    <ligand>
        <name>[4Fe-4S] cluster</name>
        <dbReference type="ChEBI" id="CHEBI:49883"/>
        <label>1</label>
    </ligand>
</feature>
<feature type="binding site" evidence="1">
    <location>
        <position position="77"/>
    </location>
    <ligand>
        <name>[4Fe-4S] cluster</name>
        <dbReference type="ChEBI" id="CHEBI:49883"/>
        <label>1</label>
    </ligand>
</feature>
<feature type="binding site" evidence="1">
    <location>
        <position position="92"/>
    </location>
    <ligand>
        <name>[4Fe-4S] cluster</name>
        <dbReference type="ChEBI" id="CHEBI:49883"/>
        <label>2</label>
        <note>4Fe-4S-S-AdoMet</note>
    </ligand>
</feature>
<feature type="binding site" evidence="1">
    <location>
        <position position="96"/>
    </location>
    <ligand>
        <name>[4Fe-4S] cluster</name>
        <dbReference type="ChEBI" id="CHEBI:49883"/>
        <label>2</label>
        <note>4Fe-4S-S-AdoMet</note>
    </ligand>
</feature>
<feature type="binding site" evidence="1">
    <location>
        <position position="99"/>
    </location>
    <ligand>
        <name>[4Fe-4S] cluster</name>
        <dbReference type="ChEBI" id="CHEBI:49883"/>
        <label>2</label>
        <note>4Fe-4S-S-AdoMet</note>
    </ligand>
</feature>
<feature type="binding site" evidence="1">
    <location>
        <position position="305"/>
    </location>
    <ligand>
        <name>[4Fe-4S] cluster</name>
        <dbReference type="ChEBI" id="CHEBI:49883"/>
        <label>1</label>
    </ligand>
</feature>
<protein>
    <recommendedName>
        <fullName evidence="1">Lipoyl synthase</fullName>
        <ecNumber evidence="1">2.8.1.8</ecNumber>
    </recommendedName>
    <alternativeName>
        <fullName evidence="1">Lip-syn</fullName>
        <shortName evidence="1">LS</shortName>
    </alternativeName>
    <alternativeName>
        <fullName evidence="1">Lipoate synthase</fullName>
    </alternativeName>
    <alternativeName>
        <fullName evidence="1">Lipoic acid synthase</fullName>
    </alternativeName>
    <alternativeName>
        <fullName evidence="1">Sulfur insertion protein LipA</fullName>
    </alternativeName>
</protein>
<sequence>MNKKKDSLFKTIKKNNIINVITTESFSKKIIKLNKPDWIKIKIPVDTFRIREIKSALRKNNLHSVCEEANCPNLPECFNRGTATFMILGSRCTRNCPFCAVSHGKPNSLNVEEPNNLAKTIFDMGIDYVVITSVVRDDLYDGGAQHFVNCIKSIRKKNKVKIEILVPDFRGRVELILKIFNSGLPDVFNHNVENVPRLYKKVRPGADYKKSLFLLESFKKKYSNIPTKSGLMLGLGEKDTEIIQVMKDLYSNGVTLLTVGQYLQPSINHIPVQRYIPLSEFKNIKKEALSIGFTNAFCGPFVRSSYHASFQANKLIKKI</sequence>
<proteinExistence type="inferred from homology"/>
<dbReference type="EC" id="2.8.1.8" evidence="1"/>
<dbReference type="EMBL" id="AE013218">
    <property type="protein sequence ID" value="AAM67817.1"/>
    <property type="molecule type" value="Genomic_DNA"/>
</dbReference>
<dbReference type="SMR" id="Q8K9Q2"/>
<dbReference type="STRING" id="198804.BUsg_259"/>
<dbReference type="KEGG" id="bas:BUsg_259"/>
<dbReference type="eggNOG" id="COG0320">
    <property type="taxonomic scope" value="Bacteria"/>
</dbReference>
<dbReference type="HOGENOM" id="CLU_033144_2_1_6"/>
<dbReference type="UniPathway" id="UPA00538">
    <property type="reaction ID" value="UER00593"/>
</dbReference>
<dbReference type="Proteomes" id="UP000000416">
    <property type="component" value="Chromosome"/>
</dbReference>
<dbReference type="GO" id="GO:0005737">
    <property type="term" value="C:cytoplasm"/>
    <property type="evidence" value="ECO:0007669"/>
    <property type="project" value="UniProtKB-SubCell"/>
</dbReference>
<dbReference type="GO" id="GO:0051539">
    <property type="term" value="F:4 iron, 4 sulfur cluster binding"/>
    <property type="evidence" value="ECO:0007669"/>
    <property type="project" value="UniProtKB-UniRule"/>
</dbReference>
<dbReference type="GO" id="GO:0016992">
    <property type="term" value="F:lipoate synthase activity"/>
    <property type="evidence" value="ECO:0007669"/>
    <property type="project" value="UniProtKB-UniRule"/>
</dbReference>
<dbReference type="GO" id="GO:0046872">
    <property type="term" value="F:metal ion binding"/>
    <property type="evidence" value="ECO:0007669"/>
    <property type="project" value="UniProtKB-KW"/>
</dbReference>
<dbReference type="FunFam" id="3.20.20.70:FF:000040">
    <property type="entry name" value="Lipoyl synthase"/>
    <property type="match status" value="1"/>
</dbReference>
<dbReference type="Gene3D" id="3.20.20.70">
    <property type="entry name" value="Aldolase class I"/>
    <property type="match status" value="1"/>
</dbReference>
<dbReference type="HAMAP" id="MF_00206">
    <property type="entry name" value="Lipoyl_synth"/>
    <property type="match status" value="1"/>
</dbReference>
<dbReference type="InterPro" id="IPR013785">
    <property type="entry name" value="Aldolase_TIM"/>
</dbReference>
<dbReference type="InterPro" id="IPR006638">
    <property type="entry name" value="Elp3/MiaA/NifB-like_rSAM"/>
</dbReference>
<dbReference type="InterPro" id="IPR031691">
    <property type="entry name" value="LIAS_N"/>
</dbReference>
<dbReference type="InterPro" id="IPR003698">
    <property type="entry name" value="Lipoyl_synth"/>
</dbReference>
<dbReference type="InterPro" id="IPR007197">
    <property type="entry name" value="rSAM"/>
</dbReference>
<dbReference type="NCBIfam" id="TIGR00510">
    <property type="entry name" value="lipA"/>
    <property type="match status" value="1"/>
</dbReference>
<dbReference type="NCBIfam" id="NF004019">
    <property type="entry name" value="PRK05481.1"/>
    <property type="match status" value="1"/>
</dbReference>
<dbReference type="NCBIfam" id="NF009544">
    <property type="entry name" value="PRK12928.1"/>
    <property type="match status" value="1"/>
</dbReference>
<dbReference type="PANTHER" id="PTHR10949">
    <property type="entry name" value="LIPOYL SYNTHASE"/>
    <property type="match status" value="1"/>
</dbReference>
<dbReference type="PANTHER" id="PTHR10949:SF0">
    <property type="entry name" value="LIPOYL SYNTHASE, MITOCHONDRIAL"/>
    <property type="match status" value="1"/>
</dbReference>
<dbReference type="Pfam" id="PF16881">
    <property type="entry name" value="LIAS_N"/>
    <property type="match status" value="1"/>
</dbReference>
<dbReference type="Pfam" id="PF04055">
    <property type="entry name" value="Radical_SAM"/>
    <property type="match status" value="1"/>
</dbReference>
<dbReference type="PIRSF" id="PIRSF005963">
    <property type="entry name" value="Lipoyl_synth"/>
    <property type="match status" value="1"/>
</dbReference>
<dbReference type="SFLD" id="SFLDF00271">
    <property type="entry name" value="lipoyl_synthase"/>
    <property type="match status" value="1"/>
</dbReference>
<dbReference type="SFLD" id="SFLDS00029">
    <property type="entry name" value="Radical_SAM"/>
    <property type="match status" value="1"/>
</dbReference>
<dbReference type="SMART" id="SM00729">
    <property type="entry name" value="Elp3"/>
    <property type="match status" value="1"/>
</dbReference>
<dbReference type="SUPFAM" id="SSF102114">
    <property type="entry name" value="Radical SAM enzymes"/>
    <property type="match status" value="1"/>
</dbReference>
<dbReference type="PROSITE" id="PS51918">
    <property type="entry name" value="RADICAL_SAM"/>
    <property type="match status" value="1"/>
</dbReference>
<organism>
    <name type="scientific">Buchnera aphidicola subsp. Schizaphis graminum (strain Sg)</name>
    <dbReference type="NCBI Taxonomy" id="198804"/>
    <lineage>
        <taxon>Bacteria</taxon>
        <taxon>Pseudomonadati</taxon>
        <taxon>Pseudomonadota</taxon>
        <taxon>Gammaproteobacteria</taxon>
        <taxon>Enterobacterales</taxon>
        <taxon>Erwiniaceae</taxon>
        <taxon>Buchnera</taxon>
    </lineage>
</organism>
<reference key="1">
    <citation type="journal article" date="2002" name="Science">
        <title>50 million years of genomic stasis in endosymbiotic bacteria.</title>
        <authorList>
            <person name="Tamas I."/>
            <person name="Klasson L."/>
            <person name="Canbaeck B."/>
            <person name="Naeslund A.K."/>
            <person name="Eriksson A.-S."/>
            <person name="Wernegreen J.J."/>
            <person name="Sandstroem J.P."/>
            <person name="Moran N.A."/>
            <person name="Andersson S.G.E."/>
        </authorList>
    </citation>
    <scope>NUCLEOTIDE SEQUENCE [LARGE SCALE GENOMIC DNA]</scope>
    <source>
        <strain>Sg</strain>
    </source>
</reference>
<gene>
    <name evidence="1" type="primary">lipA</name>
    <name type="ordered locus">BUsg_259</name>
</gene>
<evidence type="ECO:0000255" key="1">
    <source>
        <dbReference type="HAMAP-Rule" id="MF_00206"/>
    </source>
</evidence>
<evidence type="ECO:0000255" key="2">
    <source>
        <dbReference type="PROSITE-ProRule" id="PRU01266"/>
    </source>
</evidence>
<comment type="function">
    <text evidence="1">Catalyzes the radical-mediated insertion of two sulfur atoms into the C-6 and C-8 positions of the octanoyl moiety bound to the lipoyl domains of lipoate-dependent enzymes, thereby converting the octanoylated domains into lipoylated derivatives.</text>
</comment>
<comment type="catalytic activity">
    <reaction evidence="1">
        <text>[[Fe-S] cluster scaffold protein carrying a second [4Fe-4S](2+) cluster] + N(6)-octanoyl-L-lysyl-[protein] + 2 oxidized [2Fe-2S]-[ferredoxin] + 2 S-adenosyl-L-methionine + 4 H(+) = [[Fe-S] cluster scaffold protein] + N(6)-[(R)-dihydrolipoyl]-L-lysyl-[protein] + 4 Fe(3+) + 2 hydrogen sulfide + 2 5'-deoxyadenosine + 2 L-methionine + 2 reduced [2Fe-2S]-[ferredoxin]</text>
        <dbReference type="Rhea" id="RHEA:16585"/>
        <dbReference type="Rhea" id="RHEA-COMP:9928"/>
        <dbReference type="Rhea" id="RHEA-COMP:10000"/>
        <dbReference type="Rhea" id="RHEA-COMP:10001"/>
        <dbReference type="Rhea" id="RHEA-COMP:10475"/>
        <dbReference type="Rhea" id="RHEA-COMP:14568"/>
        <dbReference type="Rhea" id="RHEA-COMP:14569"/>
        <dbReference type="ChEBI" id="CHEBI:15378"/>
        <dbReference type="ChEBI" id="CHEBI:17319"/>
        <dbReference type="ChEBI" id="CHEBI:29034"/>
        <dbReference type="ChEBI" id="CHEBI:29919"/>
        <dbReference type="ChEBI" id="CHEBI:33722"/>
        <dbReference type="ChEBI" id="CHEBI:33737"/>
        <dbReference type="ChEBI" id="CHEBI:33738"/>
        <dbReference type="ChEBI" id="CHEBI:57844"/>
        <dbReference type="ChEBI" id="CHEBI:59789"/>
        <dbReference type="ChEBI" id="CHEBI:78809"/>
        <dbReference type="ChEBI" id="CHEBI:83100"/>
        <dbReference type="EC" id="2.8.1.8"/>
    </reaction>
</comment>
<comment type="cofactor">
    <cofactor evidence="1">
        <name>[4Fe-4S] cluster</name>
        <dbReference type="ChEBI" id="CHEBI:49883"/>
    </cofactor>
    <text evidence="1">Binds 2 [4Fe-4S] clusters per subunit. One cluster is coordinated with 3 cysteines and an exchangeable S-adenosyl-L-methionine.</text>
</comment>
<comment type="pathway">
    <text evidence="1">Protein modification; protein lipoylation via endogenous pathway; protein N(6)-(lipoyl)lysine from octanoyl-[acyl-carrier-protein]: step 2/2.</text>
</comment>
<comment type="subcellular location">
    <subcellularLocation>
        <location evidence="1">Cytoplasm</location>
    </subcellularLocation>
</comment>
<comment type="similarity">
    <text evidence="1">Belongs to the radical SAM superfamily. Lipoyl synthase family.</text>
</comment>
<keyword id="KW-0004">4Fe-4S</keyword>
<keyword id="KW-0963">Cytoplasm</keyword>
<keyword id="KW-0408">Iron</keyword>
<keyword id="KW-0411">Iron-sulfur</keyword>
<keyword id="KW-0479">Metal-binding</keyword>
<keyword id="KW-0949">S-adenosyl-L-methionine</keyword>
<keyword id="KW-0808">Transferase</keyword>
<name>LIPA_BUCAP</name>
<accession>Q8K9Q2</accession>